<sequence length="100" mass="11086">MKTYQEFIAEARVGAGKLEAAVNKKAHSFHDLPDKDRKKLVSLYIDRERILALPGANEGKQAKPLNAVEKKIDNFASKFGMSMDDLQQAAIEAAKAIKDK</sequence>
<evidence type="ECO:0000269" key="1">
    <source>
    </source>
</evidence>
<evidence type="ECO:0000305" key="2"/>
<comment type="function">
    <text>Internal protein II, which has a histone-like character, binds weakly to other components of the assembly core during an early stage of bacteriophage head morphogenesis.</text>
</comment>
<protein>
    <recommendedName>
        <fullName>Internal protein II</fullName>
        <shortName>IpII</shortName>
    </recommendedName>
</protein>
<accession>P03719</accession>
<organism>
    <name type="scientific">Enterobacteria phage T4</name>
    <name type="common">Bacteriophage T4</name>
    <dbReference type="NCBI Taxonomy" id="10665"/>
    <lineage>
        <taxon>Viruses</taxon>
        <taxon>Duplodnaviria</taxon>
        <taxon>Heunggongvirae</taxon>
        <taxon>Uroviricota</taxon>
        <taxon>Caudoviricetes</taxon>
        <taxon>Straboviridae</taxon>
        <taxon>Tevenvirinae</taxon>
        <taxon>Tequatrovirus</taxon>
    </lineage>
</organism>
<proteinExistence type="evidence at protein level"/>
<name>IPI2_BPT4</name>
<feature type="propeptide" id="PRO_0000003340">
    <location>
        <begin position="1"/>
        <end position="10"/>
    </location>
</feature>
<feature type="chain" id="PRO_0000003341" description="Internal protein II">
    <location>
        <begin position="11"/>
        <end position="100"/>
    </location>
</feature>
<feature type="site" description="Cleavage; by prohead core protease GP21" evidence="1">
    <location>
        <begin position="10"/>
        <end position="11"/>
    </location>
</feature>
<feature type="sequence conflict" description="In Ref. 1; AA sequence." evidence="2" ref="1">
    <original>M</original>
    <variation>ZPALKM</variation>
    <location>
        <position position="1"/>
    </location>
</feature>
<feature type="sequence conflict" description="In Ref. 1; AA sequence." evidence="2" ref="1">
    <original>K</original>
    <variation>KK</variation>
    <location>
        <position position="39"/>
    </location>
</feature>
<feature type="sequence conflict" description="In Ref. 1; AA sequence." evidence="2" ref="1">
    <original>KP</original>
    <variation>PK</variation>
    <location>
        <begin position="63"/>
        <end position="64"/>
    </location>
</feature>
<feature type="sequence conflict" description="In Ref. 1; AA sequence." evidence="2" ref="1">
    <original>DN</original>
    <variation>ND</variation>
    <location>
        <begin position="73"/>
        <end position="74"/>
    </location>
</feature>
<feature type="sequence conflict" description="In Ref. 1; AA sequence." evidence="2" ref="1">
    <original>D</original>
    <variation>N</variation>
    <location>
        <position position="84"/>
    </location>
</feature>
<feature type="sequence conflict" description="In Ref. 1; AA sequence." evidence="2" ref="1">
    <original>AAIE</original>
    <variation>IEAA</variation>
    <location>
        <begin position="89"/>
        <end position="92"/>
    </location>
</feature>
<gene>
    <name type="primary">ipi2</name>
</gene>
<dbReference type="EMBL" id="X04567">
    <property type="protein sequence ID" value="CAA28214.1"/>
    <property type="molecule type" value="Genomic_DNA"/>
</dbReference>
<dbReference type="EMBL" id="AF158101">
    <property type="protein sequence ID" value="AAD42586.1"/>
    <property type="molecule type" value="Genomic_DNA"/>
</dbReference>
<dbReference type="PIR" id="B36780">
    <property type="entry name" value="HIBP24"/>
</dbReference>
<dbReference type="SMR" id="P03719"/>
<dbReference type="KEGG" id="vg:1258729"/>
<dbReference type="OrthoDB" id="19961at10239"/>
<dbReference type="Proteomes" id="UP000009087">
    <property type="component" value="Segment"/>
</dbReference>
<reference key="1">
    <citation type="journal article" date="1976" name="J. Mol. Biol.">
        <title>Primary structure of bacteriophage T4 internal protein II and characterization of the cleavage upon phage maturation.</title>
        <authorList>
            <person name="Isobe T."/>
            <person name="Black L.W."/>
            <person name="Tsugita A."/>
        </authorList>
    </citation>
    <scope>PROTEIN SEQUENCE</scope>
</reference>
<reference key="2">
    <citation type="journal article" date="1986" name="Nucleic Acids Res.">
        <title>Nucleotide sequence and analysis of the 58.3 to 65.5-kb early region of bacteriophage T4.</title>
        <authorList>
            <person name="Valerie K."/>
            <person name="Stevens J."/>
            <person name="Lynch M."/>
            <person name="Henderson E.E."/>
            <person name="de Riel J.K."/>
        </authorList>
    </citation>
    <scope>NUCLEOTIDE SEQUENCE [GENOMIC DNA]</scope>
</reference>
<reference key="3">
    <citation type="journal article" date="2003" name="Microbiol. Mol. Biol. Rev.">
        <title>Bacteriophage T4 genome.</title>
        <authorList>
            <person name="Miller E.S."/>
            <person name="Kutter E."/>
            <person name="Mosig G."/>
            <person name="Arisaka F."/>
            <person name="Kunisawa T."/>
            <person name="Ruger W."/>
        </authorList>
    </citation>
    <scope>NUCLEOTIDE SEQUENCE [LARGE SCALE GENOMIC DNA]</scope>
</reference>
<keyword id="KW-0903">Direct protein sequencing</keyword>
<keyword id="KW-1185">Reference proteome</keyword>
<organismHost>
    <name type="scientific">Escherichia coli</name>
    <dbReference type="NCBI Taxonomy" id="562"/>
</organismHost>